<protein>
    <recommendedName>
        <fullName>Ovostatin</fullName>
    </recommendedName>
    <alternativeName>
        <fullName>Ovomacroglobulin</fullName>
    </alternativeName>
</protein>
<evidence type="ECO:0000269" key="1">
    <source>
    </source>
</evidence>
<evidence type="ECO:0000305" key="2"/>
<keyword id="KW-0082">Bait region</keyword>
<keyword id="KW-0903">Direct protein sequencing</keyword>
<keyword id="KW-1015">Disulfide bond</keyword>
<keyword id="KW-0646">Protease inhibitor</keyword>
<keyword id="KW-0964">Secreted</keyword>
<keyword id="KW-0722">Serine protease inhibitor</keyword>
<keyword id="KW-0882">Thioester bond</keyword>
<accession>P20739</accession>
<dbReference type="PIR" id="S00121">
    <property type="entry name" value="S00121"/>
</dbReference>
<dbReference type="Proteomes" id="UP000694400">
    <property type="component" value="Unplaced"/>
</dbReference>
<dbReference type="GO" id="GO:0005615">
    <property type="term" value="C:extracellular space"/>
    <property type="evidence" value="ECO:0007669"/>
    <property type="project" value="InterPro"/>
</dbReference>
<dbReference type="GO" id="GO:0004867">
    <property type="term" value="F:serine-type endopeptidase inhibitor activity"/>
    <property type="evidence" value="ECO:0007669"/>
    <property type="project" value="UniProtKB-KW"/>
</dbReference>
<dbReference type="Gene3D" id="1.50.10.20">
    <property type="match status" value="1"/>
</dbReference>
<dbReference type="InterPro" id="IPR050473">
    <property type="entry name" value="A2M/Complement_sys"/>
</dbReference>
<dbReference type="InterPro" id="IPR011626">
    <property type="entry name" value="Alpha-macroglobulin_TED"/>
</dbReference>
<dbReference type="InterPro" id="IPR019742">
    <property type="entry name" value="MacrogloblnA2_CS"/>
</dbReference>
<dbReference type="InterPro" id="IPR008930">
    <property type="entry name" value="Terpenoid_cyclase/PrenylTrfase"/>
</dbReference>
<dbReference type="PANTHER" id="PTHR11412">
    <property type="entry name" value="MACROGLOBULIN / COMPLEMENT"/>
    <property type="match status" value="1"/>
</dbReference>
<dbReference type="PANTHER" id="PTHR11412:SF171">
    <property type="entry name" value="PREGNANCY ZONE PROTEIN-LIKE PROTEIN"/>
    <property type="match status" value="1"/>
</dbReference>
<dbReference type="Pfam" id="PF07678">
    <property type="entry name" value="TED_complement"/>
    <property type="match status" value="1"/>
</dbReference>
<dbReference type="SUPFAM" id="SSF48239">
    <property type="entry name" value="Terpenoid cyclases/Protein prenyltransferases"/>
    <property type="match status" value="1"/>
</dbReference>
<dbReference type="PROSITE" id="PS00477">
    <property type="entry name" value="ALPHA_2_MACROGLOBULIN"/>
    <property type="match status" value="1"/>
</dbReference>
<proteinExistence type="evidence at protein level"/>
<reference key="1">
    <citation type="journal article" date="1987" name="FEBS Lett.">
        <title>Amino acid sequence of a 32-residue region around the thiol ester site in duck ovostatin.</title>
        <authorList>
            <person name="Nagase H."/>
            <person name="Brew K."/>
        </authorList>
    </citation>
    <scope>PROTEIN SEQUENCE</scope>
</reference>
<sequence>ASFSVVGDIMGTSMQNLHQLLQMPFGCGEQNM</sequence>
<comment type="function">
    <text>Is able to inhibit all four classes of proteinases by a unique 'trapping' mechanism. This protein has a peptide stretch, called the 'bait region' which contains specific cleavage sites for different proteinases. When a proteinase cleaves the bait region, a conformational change is induced in the protein which traps the proteinase. The entrapped enzyme remains active against low molecular weight substrates (activity against high molecular weight substrates is greatly reduced). Following cleavage in the bait region a thioester bond is hydrolyzed and mediates the covalent binding of the protein to the proteinase.</text>
</comment>
<comment type="subunit">
    <text>Homotetramer, which consists of two pairs of disulfide-linked chains.</text>
</comment>
<comment type="subcellular location">
    <subcellularLocation>
        <location>Secreted</location>
    </subcellularLocation>
</comment>
<comment type="similarity">
    <text evidence="2">Belongs to the protease inhibitor I39 (alpha-2-macroglobulin) family.</text>
</comment>
<feature type="chain" id="PRO_0000093794" description="Ovostatin">
    <location>
        <begin position="1" status="less than"/>
        <end position="32" status="greater than"/>
    </location>
</feature>
<feature type="cross-link" description="Isoglutamyl cysteine thioester (Cys-Gln)" evidence="1">
    <location>
        <begin position="27"/>
        <end position="30"/>
    </location>
</feature>
<feature type="non-terminal residue">
    <location>
        <position position="1"/>
    </location>
</feature>
<feature type="non-terminal residue">
    <location>
        <position position="32"/>
    </location>
</feature>
<name>OVOS_ANAPL</name>
<organism>
    <name type="scientific">Anas platyrhynchos</name>
    <name type="common">Mallard</name>
    <name type="synonym">Anas boschas</name>
    <dbReference type="NCBI Taxonomy" id="8839"/>
    <lineage>
        <taxon>Eukaryota</taxon>
        <taxon>Metazoa</taxon>
        <taxon>Chordata</taxon>
        <taxon>Craniata</taxon>
        <taxon>Vertebrata</taxon>
        <taxon>Euteleostomi</taxon>
        <taxon>Archelosauria</taxon>
        <taxon>Archosauria</taxon>
        <taxon>Dinosauria</taxon>
        <taxon>Saurischia</taxon>
        <taxon>Theropoda</taxon>
        <taxon>Coelurosauria</taxon>
        <taxon>Aves</taxon>
        <taxon>Neognathae</taxon>
        <taxon>Galloanserae</taxon>
        <taxon>Anseriformes</taxon>
        <taxon>Anatidae</taxon>
        <taxon>Anatinae</taxon>
        <taxon>Anas</taxon>
    </lineage>
</organism>